<proteinExistence type="inferred from homology"/>
<reference key="1">
    <citation type="journal article" date="1999" name="Biosci. Biotechnol. Biochem.">
        <title>Sequence analysis of a 32-kb region including the major ribosomal protein gene clusters from alkaliphilic Bacillus sp. strain C-125.</title>
        <authorList>
            <person name="Takami H."/>
            <person name="Takaki Y."/>
            <person name="Nakasone K."/>
            <person name="Hirama C."/>
            <person name="Inoue A."/>
            <person name="Horikoshi K."/>
        </authorList>
    </citation>
    <scope>NUCLEOTIDE SEQUENCE [GENOMIC DNA]</scope>
    <source>
        <strain>ATCC BAA-125 / DSM 18197 / FERM 7344 / JCM 9153 / C-125</strain>
    </source>
</reference>
<reference key="2">
    <citation type="journal article" date="2000" name="Nucleic Acids Res.">
        <title>Complete genome sequence of the alkaliphilic bacterium Bacillus halodurans and genomic sequence comparison with Bacillus subtilis.</title>
        <authorList>
            <person name="Takami H."/>
            <person name="Nakasone K."/>
            <person name="Takaki Y."/>
            <person name="Maeno G."/>
            <person name="Sasaki R."/>
            <person name="Masui N."/>
            <person name="Fuji F."/>
            <person name="Hirama C."/>
            <person name="Nakamura Y."/>
            <person name="Ogasawara N."/>
            <person name="Kuhara S."/>
            <person name="Horikoshi K."/>
        </authorList>
    </citation>
    <scope>NUCLEOTIDE SEQUENCE [LARGE SCALE GENOMIC DNA]</scope>
    <source>
        <strain>ATCC BAA-125 / DSM 18197 / FERM 7344 / JCM 9153 / C-125</strain>
    </source>
</reference>
<organism>
    <name type="scientific">Halalkalibacterium halodurans (strain ATCC BAA-125 / DSM 18197 / FERM 7344 / JCM 9153 / C-125)</name>
    <name type="common">Bacillus halodurans</name>
    <dbReference type="NCBI Taxonomy" id="272558"/>
    <lineage>
        <taxon>Bacteria</taxon>
        <taxon>Bacillati</taxon>
        <taxon>Bacillota</taxon>
        <taxon>Bacilli</taxon>
        <taxon>Bacillales</taxon>
        <taxon>Bacillaceae</taxon>
        <taxon>Halalkalibacterium (ex Joshi et al. 2022)</taxon>
    </lineage>
</organism>
<gene>
    <name evidence="1" type="primary">rpoC</name>
    <name type="ordered locus">BH0127</name>
</gene>
<dbReference type="EC" id="2.7.7.6" evidence="1"/>
<dbReference type="EMBL" id="AB017508">
    <property type="protein sequence ID" value="BAA75264.1"/>
    <property type="molecule type" value="Genomic_DNA"/>
</dbReference>
<dbReference type="EMBL" id="BA000004">
    <property type="protein sequence ID" value="BAB03846.1"/>
    <property type="molecule type" value="Genomic_DNA"/>
</dbReference>
<dbReference type="PIR" id="T44376">
    <property type="entry name" value="T44376"/>
</dbReference>
<dbReference type="RefSeq" id="WP_010896310.1">
    <property type="nucleotide sequence ID" value="NC_002570.2"/>
</dbReference>
<dbReference type="SMR" id="Q9Z9M1"/>
<dbReference type="STRING" id="272558.gene:10725967"/>
<dbReference type="KEGG" id="bha:BH0127"/>
<dbReference type="eggNOG" id="COG0086">
    <property type="taxonomic scope" value="Bacteria"/>
</dbReference>
<dbReference type="HOGENOM" id="CLU_000524_3_1_9"/>
<dbReference type="OrthoDB" id="9815296at2"/>
<dbReference type="Proteomes" id="UP000001258">
    <property type="component" value="Chromosome"/>
</dbReference>
<dbReference type="GO" id="GO:0000428">
    <property type="term" value="C:DNA-directed RNA polymerase complex"/>
    <property type="evidence" value="ECO:0007669"/>
    <property type="project" value="UniProtKB-KW"/>
</dbReference>
<dbReference type="GO" id="GO:0003677">
    <property type="term" value="F:DNA binding"/>
    <property type="evidence" value="ECO:0007669"/>
    <property type="project" value="UniProtKB-UniRule"/>
</dbReference>
<dbReference type="GO" id="GO:0003899">
    <property type="term" value="F:DNA-directed RNA polymerase activity"/>
    <property type="evidence" value="ECO:0007669"/>
    <property type="project" value="UniProtKB-UniRule"/>
</dbReference>
<dbReference type="GO" id="GO:0000287">
    <property type="term" value="F:magnesium ion binding"/>
    <property type="evidence" value="ECO:0007669"/>
    <property type="project" value="UniProtKB-UniRule"/>
</dbReference>
<dbReference type="GO" id="GO:0008270">
    <property type="term" value="F:zinc ion binding"/>
    <property type="evidence" value="ECO:0007669"/>
    <property type="project" value="UniProtKB-UniRule"/>
</dbReference>
<dbReference type="GO" id="GO:0006351">
    <property type="term" value="P:DNA-templated transcription"/>
    <property type="evidence" value="ECO:0007669"/>
    <property type="project" value="UniProtKB-UniRule"/>
</dbReference>
<dbReference type="CDD" id="cd02655">
    <property type="entry name" value="RNAP_beta'_C"/>
    <property type="match status" value="1"/>
</dbReference>
<dbReference type="CDD" id="cd01609">
    <property type="entry name" value="RNAP_beta'_N"/>
    <property type="match status" value="1"/>
</dbReference>
<dbReference type="FunFam" id="1.10.132.30:FF:000003">
    <property type="entry name" value="DNA-directed RNA polymerase subunit beta"/>
    <property type="match status" value="1"/>
</dbReference>
<dbReference type="FunFam" id="1.10.150.390:FF:000002">
    <property type="entry name" value="DNA-directed RNA polymerase subunit beta"/>
    <property type="match status" value="1"/>
</dbReference>
<dbReference type="FunFam" id="1.10.40.90:FF:000001">
    <property type="entry name" value="DNA-directed RNA polymerase subunit beta"/>
    <property type="match status" value="1"/>
</dbReference>
<dbReference type="FunFam" id="4.10.860.120:FF:000001">
    <property type="entry name" value="DNA-directed RNA polymerase subunit beta"/>
    <property type="match status" value="1"/>
</dbReference>
<dbReference type="Gene3D" id="1.10.132.30">
    <property type="match status" value="1"/>
</dbReference>
<dbReference type="Gene3D" id="1.10.150.390">
    <property type="match status" value="1"/>
</dbReference>
<dbReference type="Gene3D" id="1.10.1790.20">
    <property type="match status" value="1"/>
</dbReference>
<dbReference type="Gene3D" id="1.10.40.90">
    <property type="match status" value="1"/>
</dbReference>
<dbReference type="Gene3D" id="2.40.40.20">
    <property type="match status" value="1"/>
</dbReference>
<dbReference type="Gene3D" id="2.40.50.100">
    <property type="match status" value="1"/>
</dbReference>
<dbReference type="Gene3D" id="4.10.860.120">
    <property type="entry name" value="RNA polymerase II, clamp domain"/>
    <property type="match status" value="1"/>
</dbReference>
<dbReference type="Gene3D" id="1.10.274.100">
    <property type="entry name" value="RNA polymerase Rpb1, domain 3"/>
    <property type="match status" value="1"/>
</dbReference>
<dbReference type="HAMAP" id="MF_01322">
    <property type="entry name" value="RNApol_bact_RpoC"/>
    <property type="match status" value="1"/>
</dbReference>
<dbReference type="InterPro" id="IPR045867">
    <property type="entry name" value="DNA-dir_RpoC_beta_prime"/>
</dbReference>
<dbReference type="InterPro" id="IPR012754">
    <property type="entry name" value="DNA-dir_RpoC_beta_prime_bact"/>
</dbReference>
<dbReference type="InterPro" id="IPR000722">
    <property type="entry name" value="RNA_pol_asu"/>
</dbReference>
<dbReference type="InterPro" id="IPR006592">
    <property type="entry name" value="RNA_pol_N"/>
</dbReference>
<dbReference type="InterPro" id="IPR007080">
    <property type="entry name" value="RNA_pol_Rpb1_1"/>
</dbReference>
<dbReference type="InterPro" id="IPR007066">
    <property type="entry name" value="RNA_pol_Rpb1_3"/>
</dbReference>
<dbReference type="InterPro" id="IPR042102">
    <property type="entry name" value="RNA_pol_Rpb1_3_sf"/>
</dbReference>
<dbReference type="InterPro" id="IPR007083">
    <property type="entry name" value="RNA_pol_Rpb1_4"/>
</dbReference>
<dbReference type="InterPro" id="IPR007081">
    <property type="entry name" value="RNA_pol_Rpb1_5"/>
</dbReference>
<dbReference type="InterPro" id="IPR044893">
    <property type="entry name" value="RNA_pol_Rpb1_clamp_domain"/>
</dbReference>
<dbReference type="InterPro" id="IPR038120">
    <property type="entry name" value="Rpb1_funnel_sf"/>
</dbReference>
<dbReference type="NCBIfam" id="TIGR02386">
    <property type="entry name" value="rpoC_TIGR"/>
    <property type="match status" value="1"/>
</dbReference>
<dbReference type="PANTHER" id="PTHR19376">
    <property type="entry name" value="DNA-DIRECTED RNA POLYMERASE"/>
    <property type="match status" value="1"/>
</dbReference>
<dbReference type="PANTHER" id="PTHR19376:SF54">
    <property type="entry name" value="DNA-DIRECTED RNA POLYMERASE SUBUNIT BETA"/>
    <property type="match status" value="1"/>
</dbReference>
<dbReference type="Pfam" id="PF04997">
    <property type="entry name" value="RNA_pol_Rpb1_1"/>
    <property type="match status" value="1"/>
</dbReference>
<dbReference type="Pfam" id="PF00623">
    <property type="entry name" value="RNA_pol_Rpb1_2"/>
    <property type="match status" value="2"/>
</dbReference>
<dbReference type="Pfam" id="PF04983">
    <property type="entry name" value="RNA_pol_Rpb1_3"/>
    <property type="match status" value="1"/>
</dbReference>
<dbReference type="Pfam" id="PF05000">
    <property type="entry name" value="RNA_pol_Rpb1_4"/>
    <property type="match status" value="1"/>
</dbReference>
<dbReference type="Pfam" id="PF04998">
    <property type="entry name" value="RNA_pol_Rpb1_5"/>
    <property type="match status" value="2"/>
</dbReference>
<dbReference type="SMART" id="SM00663">
    <property type="entry name" value="RPOLA_N"/>
    <property type="match status" value="1"/>
</dbReference>
<dbReference type="SUPFAM" id="SSF64484">
    <property type="entry name" value="beta and beta-prime subunits of DNA dependent RNA-polymerase"/>
    <property type="match status" value="1"/>
</dbReference>
<protein>
    <recommendedName>
        <fullName evidence="1">DNA-directed RNA polymerase subunit beta'</fullName>
        <shortName evidence="1">RNAP subunit beta'</shortName>
        <ecNumber evidence="1">2.7.7.6</ecNumber>
    </recommendedName>
    <alternativeName>
        <fullName evidence="1">RNA polymerase subunit beta'</fullName>
    </alternativeName>
    <alternativeName>
        <fullName evidence="1">Transcriptase subunit beta'</fullName>
    </alternativeName>
</protein>
<feature type="chain" id="PRO_0000067706" description="DNA-directed RNA polymerase subunit beta'">
    <location>
        <begin position="1"/>
        <end position="1206"/>
    </location>
</feature>
<feature type="binding site" evidence="1">
    <location>
        <position position="60"/>
    </location>
    <ligand>
        <name>Zn(2+)</name>
        <dbReference type="ChEBI" id="CHEBI:29105"/>
        <label>1</label>
    </ligand>
</feature>
<feature type="binding site" evidence="1">
    <location>
        <position position="62"/>
    </location>
    <ligand>
        <name>Zn(2+)</name>
        <dbReference type="ChEBI" id="CHEBI:29105"/>
        <label>1</label>
    </ligand>
</feature>
<feature type="binding site" evidence="1">
    <location>
        <position position="75"/>
    </location>
    <ligand>
        <name>Zn(2+)</name>
        <dbReference type="ChEBI" id="CHEBI:29105"/>
        <label>1</label>
    </ligand>
</feature>
<feature type="binding site" evidence="1">
    <location>
        <position position="78"/>
    </location>
    <ligand>
        <name>Zn(2+)</name>
        <dbReference type="ChEBI" id="CHEBI:29105"/>
        <label>1</label>
    </ligand>
</feature>
<feature type="binding site" evidence="1">
    <location>
        <position position="449"/>
    </location>
    <ligand>
        <name>Mg(2+)</name>
        <dbReference type="ChEBI" id="CHEBI:18420"/>
    </ligand>
</feature>
<feature type="binding site" evidence="1">
    <location>
        <position position="451"/>
    </location>
    <ligand>
        <name>Mg(2+)</name>
        <dbReference type="ChEBI" id="CHEBI:18420"/>
    </ligand>
</feature>
<feature type="binding site" evidence="1">
    <location>
        <position position="453"/>
    </location>
    <ligand>
        <name>Mg(2+)</name>
        <dbReference type="ChEBI" id="CHEBI:18420"/>
    </ligand>
</feature>
<feature type="binding site" evidence="1">
    <location>
        <position position="818"/>
    </location>
    <ligand>
        <name>Zn(2+)</name>
        <dbReference type="ChEBI" id="CHEBI:29105"/>
        <label>2</label>
    </ligand>
</feature>
<feature type="binding site" evidence="1">
    <location>
        <position position="892"/>
    </location>
    <ligand>
        <name>Zn(2+)</name>
        <dbReference type="ChEBI" id="CHEBI:29105"/>
        <label>2</label>
    </ligand>
</feature>
<feature type="binding site" evidence="1">
    <location>
        <position position="899"/>
    </location>
    <ligand>
        <name>Zn(2+)</name>
        <dbReference type="ChEBI" id="CHEBI:29105"/>
        <label>2</label>
    </ligand>
</feature>
<feature type="binding site" evidence="1">
    <location>
        <position position="902"/>
    </location>
    <ligand>
        <name>Zn(2+)</name>
        <dbReference type="ChEBI" id="CHEBI:29105"/>
        <label>2</label>
    </ligand>
</feature>
<keyword id="KW-0240">DNA-directed RNA polymerase</keyword>
<keyword id="KW-0460">Magnesium</keyword>
<keyword id="KW-0479">Metal-binding</keyword>
<keyword id="KW-0548">Nucleotidyltransferase</keyword>
<keyword id="KW-1185">Reference proteome</keyword>
<keyword id="KW-0804">Transcription</keyword>
<keyword id="KW-0808">Transferase</keyword>
<keyword id="KW-0862">Zinc</keyword>
<accession>Q9Z9M1</accession>
<comment type="function">
    <text evidence="1">DNA-dependent RNA polymerase catalyzes the transcription of DNA into RNA using the four ribonucleoside triphosphates as substrates.</text>
</comment>
<comment type="catalytic activity">
    <reaction evidence="1">
        <text>RNA(n) + a ribonucleoside 5'-triphosphate = RNA(n+1) + diphosphate</text>
        <dbReference type="Rhea" id="RHEA:21248"/>
        <dbReference type="Rhea" id="RHEA-COMP:14527"/>
        <dbReference type="Rhea" id="RHEA-COMP:17342"/>
        <dbReference type="ChEBI" id="CHEBI:33019"/>
        <dbReference type="ChEBI" id="CHEBI:61557"/>
        <dbReference type="ChEBI" id="CHEBI:140395"/>
        <dbReference type="EC" id="2.7.7.6"/>
    </reaction>
</comment>
<comment type="cofactor">
    <cofactor evidence="1">
        <name>Mg(2+)</name>
        <dbReference type="ChEBI" id="CHEBI:18420"/>
    </cofactor>
    <text evidence="1">Binds 1 Mg(2+) ion per subunit.</text>
</comment>
<comment type="cofactor">
    <cofactor evidence="1">
        <name>Zn(2+)</name>
        <dbReference type="ChEBI" id="CHEBI:29105"/>
    </cofactor>
    <text evidence="1">Binds 2 Zn(2+) ions per subunit.</text>
</comment>
<comment type="subunit">
    <text evidence="1">The RNAP catalytic core consists of 2 alpha, 1 beta, 1 beta' and 1 omega subunit. When a sigma factor is associated with the core the holoenzyme is formed, which can initiate transcription.</text>
</comment>
<comment type="similarity">
    <text evidence="1">Belongs to the RNA polymerase beta' chain family.</text>
</comment>
<evidence type="ECO:0000255" key="1">
    <source>
        <dbReference type="HAMAP-Rule" id="MF_01322"/>
    </source>
</evidence>
<name>RPOC_HALH5</name>
<sequence>MIDVNNFEYMKIGLASPNKIRSWSRGEVKKPETINYRTLKPEKDGLFCERIFGPQKDWECHCGKYKRVRYKGVVCDRCGVEVTRAKVRRERMGHIELAAPVSHIWYFKGIPSRMGLVLDMSPRSLEEVIYFASYVVTDPGDTPLEKKQLLSEKEFRAYLDKYGRSFTAQMGAEAIRKLLMDIDLDKEVDGLKEELQTAQGQRRTRAIKRLEVLEAFRNSGNEPSWMILDVLPVIPPELRPMVQLDGGRFATSDLNDLYRRVINRNNRLKRLLDLGAPSIIVQNEKRMLQEAVDALIDNGRRGRPVTGPGNRPLKSLSHMLKGKQGRFRQNLLGKRVDYSGRSVIVVGPNLKMYQCGLPKEMALELFKPFVMKELVSKGLAHNIKSAKRKVERVQPEVWDVLEEVIKEHPVLLNRAPTLHRLGIQAFEPTLVEGRAIKLHPLVCTAYNADFDGDQMAVHVPLSAEAQAEARILMLAAQNILNPKDGKPVVTPSQDMVLGNYYLTMEREGAKGEGSVFKDTNEALIAYQNGYVHLHTRIAIPVASLGKTTFKEEQNSQLLLTTVGKLIFNEILPESFPYVNEPTAHNLEVETPSKYMVPTSTNVKELFQERDVVAPFKKGFLGNIIAEVFKKFKITETSKMLDRMKDLGFKYSTKAGITVGVADIVVLPEKKEILAEAEKKVDRVLKQFRRGLITEEERYDRVISIWSEAKDVIQDKLMGSLDKRNPIFMMSDSGARGNASNFTQLAGMRGLMANPSGRIIELPIKSSFREGLTVLEYFISTHGARKGLADTALKTADSGYLTRRLVDVAQDVIVREDDCGTDRGLEVEAIKEGNEIIEGLYDRLVGRVAFKTVRHPETGEPIVKKNELIHEDLAKQIVEAGVEQVTIRSVFTCDTRHGVCKKCYGRNLATGSDVEVGEAVGIIAAQSIGEPGTQLTMRTFHTGGVAGDDITQGLPRIQELFEARNPKGQAVITEIEGEVTNINEADKREITVKGEMETKTYSIPYGARIKVELGEQVVPGQSLTEGSIDPKELLKVQGMTGVQEYLLREVQKVYRMQGVEIGDKHVEVMVRQMLRKIRVIDAGDTEVLPGSLIEIQHFNDENKKVLLSGKRPATGRPVLLGITKASLETDSFLSAASFQETTRVLTDAAIKGKRDELVGLKENVIIGKLVPAGTGMNRYRNLDIVSDYDQQAVGTEEAVMEEAVTTE</sequence>